<organism>
    <name type="scientific">Oenothera biennis</name>
    <name type="common">German evening primrose</name>
    <name type="synonym">Onagra biennis</name>
    <dbReference type="NCBI Taxonomy" id="3942"/>
    <lineage>
        <taxon>Eukaryota</taxon>
        <taxon>Viridiplantae</taxon>
        <taxon>Streptophyta</taxon>
        <taxon>Embryophyta</taxon>
        <taxon>Tracheophyta</taxon>
        <taxon>Spermatophyta</taxon>
        <taxon>Magnoliopsida</taxon>
        <taxon>eudicotyledons</taxon>
        <taxon>Gunneridae</taxon>
        <taxon>Pentapetalae</taxon>
        <taxon>rosids</taxon>
        <taxon>malvids</taxon>
        <taxon>Myrtales</taxon>
        <taxon>Onagraceae</taxon>
        <taxon>Onagroideae</taxon>
        <taxon>Onagreae</taxon>
        <taxon>Oenothera</taxon>
    </lineage>
</organism>
<reference key="1">
    <citation type="journal article" date="2008" name="Nucleic Acids Res.">
        <title>The complete nucleotide sequences of the five genetically distinct plastid genomes of Oenothera, subsection Oenothera: I. Sequence evaluation and plastome evolution.</title>
        <authorList>
            <person name="Greiner S."/>
            <person name="Wang X."/>
            <person name="Rauwolf U."/>
            <person name="Silber M.V."/>
            <person name="Mayer K."/>
            <person name="Meurer J."/>
            <person name="Haberer G."/>
            <person name="Herrmann R.G."/>
        </authorList>
    </citation>
    <scope>NUCLEOTIDE SEQUENCE [LARGE SCALE GENOMIC DNA]</scope>
    <source>
        <strain>cv. Suaveolens Grado</strain>
    </source>
</reference>
<accession>B0Z4V3</accession>
<dbReference type="EMBL" id="EU262889">
    <property type="protein sequence ID" value="ABW98865.1"/>
    <property type="molecule type" value="Genomic_DNA"/>
</dbReference>
<dbReference type="RefSeq" id="YP_001687360.1">
    <property type="nucleotide sequence ID" value="NC_010361.1"/>
</dbReference>
<dbReference type="SMR" id="B0Z4V3"/>
<dbReference type="GeneID" id="5951977"/>
<dbReference type="GO" id="GO:0009507">
    <property type="term" value="C:chloroplast"/>
    <property type="evidence" value="ECO:0007669"/>
    <property type="project" value="UniProtKB-SubCell"/>
</dbReference>
<dbReference type="GO" id="GO:0015935">
    <property type="term" value="C:small ribosomal subunit"/>
    <property type="evidence" value="ECO:0007669"/>
    <property type="project" value="TreeGrafter"/>
</dbReference>
<dbReference type="GO" id="GO:0019843">
    <property type="term" value="F:rRNA binding"/>
    <property type="evidence" value="ECO:0007669"/>
    <property type="project" value="UniProtKB-UniRule"/>
</dbReference>
<dbReference type="GO" id="GO:0003735">
    <property type="term" value="F:structural constituent of ribosome"/>
    <property type="evidence" value="ECO:0007669"/>
    <property type="project" value="InterPro"/>
</dbReference>
<dbReference type="GO" id="GO:0006412">
    <property type="term" value="P:translation"/>
    <property type="evidence" value="ECO:0007669"/>
    <property type="project" value="UniProtKB-UniRule"/>
</dbReference>
<dbReference type="FunFam" id="1.10.287.1480:FF:000001">
    <property type="entry name" value="30S ribosomal protein S14"/>
    <property type="match status" value="1"/>
</dbReference>
<dbReference type="Gene3D" id="1.10.287.1480">
    <property type="match status" value="1"/>
</dbReference>
<dbReference type="HAMAP" id="MF_00537">
    <property type="entry name" value="Ribosomal_uS14_1"/>
    <property type="match status" value="1"/>
</dbReference>
<dbReference type="InterPro" id="IPR001209">
    <property type="entry name" value="Ribosomal_uS14"/>
</dbReference>
<dbReference type="InterPro" id="IPR023036">
    <property type="entry name" value="Ribosomal_uS14_bac/plastid"/>
</dbReference>
<dbReference type="InterPro" id="IPR018271">
    <property type="entry name" value="Ribosomal_uS14_CS"/>
</dbReference>
<dbReference type="NCBIfam" id="NF006477">
    <property type="entry name" value="PRK08881.1"/>
    <property type="match status" value="1"/>
</dbReference>
<dbReference type="PANTHER" id="PTHR19836">
    <property type="entry name" value="30S RIBOSOMAL PROTEIN S14"/>
    <property type="match status" value="1"/>
</dbReference>
<dbReference type="PANTHER" id="PTHR19836:SF19">
    <property type="entry name" value="SMALL RIBOSOMAL SUBUNIT PROTEIN US14M"/>
    <property type="match status" value="1"/>
</dbReference>
<dbReference type="Pfam" id="PF00253">
    <property type="entry name" value="Ribosomal_S14"/>
    <property type="match status" value="1"/>
</dbReference>
<dbReference type="SUPFAM" id="SSF57716">
    <property type="entry name" value="Glucocorticoid receptor-like (DNA-binding domain)"/>
    <property type="match status" value="1"/>
</dbReference>
<dbReference type="PROSITE" id="PS00527">
    <property type="entry name" value="RIBOSOMAL_S14"/>
    <property type="match status" value="1"/>
</dbReference>
<sequence>MARKGLIQREKKREKLEQKYRLIRRSSKKEISTAPSLSEKWKIHGKLQSSPRNSAPTRLHRRCFSTGRPRANYRDFRLSGHILREMVHACLLPGATRSSW</sequence>
<evidence type="ECO:0000255" key="1">
    <source>
        <dbReference type="HAMAP-Rule" id="MF_00537"/>
    </source>
</evidence>
<evidence type="ECO:0000305" key="2"/>
<geneLocation type="chloroplast"/>
<comment type="function">
    <text evidence="1">Binds 16S rRNA, required for the assembly of 30S particles.</text>
</comment>
<comment type="subunit">
    <text evidence="1">Part of the 30S ribosomal subunit.</text>
</comment>
<comment type="subcellular location">
    <subcellularLocation>
        <location>Plastid</location>
        <location>Chloroplast</location>
    </subcellularLocation>
</comment>
<comment type="similarity">
    <text evidence="1">Belongs to the universal ribosomal protein uS14 family.</text>
</comment>
<keyword id="KW-0150">Chloroplast</keyword>
<keyword id="KW-0934">Plastid</keyword>
<keyword id="KW-0687">Ribonucleoprotein</keyword>
<keyword id="KW-0689">Ribosomal protein</keyword>
<keyword id="KW-0694">RNA-binding</keyword>
<keyword id="KW-0699">rRNA-binding</keyword>
<gene>
    <name evidence="1" type="primary">rps14</name>
</gene>
<name>RR14_OENBI</name>
<proteinExistence type="inferred from homology"/>
<feature type="chain" id="PRO_0000354431" description="Small ribosomal subunit protein uS14c">
    <location>
        <begin position="1"/>
        <end position="100"/>
    </location>
</feature>
<protein>
    <recommendedName>
        <fullName evidence="1">Small ribosomal subunit protein uS14c</fullName>
    </recommendedName>
    <alternativeName>
        <fullName evidence="2">30S ribosomal protein S14, chloroplastic</fullName>
    </alternativeName>
</protein>